<accession>B8G644</accession>
<keyword id="KW-0963">Cytoplasm</keyword>
<keyword id="KW-0460">Magnesium</keyword>
<keyword id="KW-0479">Metal-binding</keyword>
<keyword id="KW-0566">Pantothenate biosynthesis</keyword>
<keyword id="KW-0808">Transferase</keyword>
<name>PANB_CHLAD</name>
<reference key="1">
    <citation type="submission" date="2008-12" db="EMBL/GenBank/DDBJ databases">
        <title>Complete sequence of Chloroflexus aggregans DSM 9485.</title>
        <authorList>
            <consortium name="US DOE Joint Genome Institute"/>
            <person name="Lucas S."/>
            <person name="Copeland A."/>
            <person name="Lapidus A."/>
            <person name="Glavina del Rio T."/>
            <person name="Dalin E."/>
            <person name="Tice H."/>
            <person name="Pitluck S."/>
            <person name="Foster B."/>
            <person name="Larimer F."/>
            <person name="Land M."/>
            <person name="Hauser L."/>
            <person name="Kyrpides N."/>
            <person name="Mikhailova N."/>
            <person name="Bryant D.A."/>
            <person name="Richardson P."/>
        </authorList>
    </citation>
    <scope>NUCLEOTIDE SEQUENCE [LARGE SCALE GENOMIC DNA]</scope>
    <source>
        <strain>MD-66 / DSM 9485</strain>
    </source>
</reference>
<dbReference type="EC" id="2.1.2.11" evidence="1"/>
<dbReference type="EMBL" id="CP001337">
    <property type="protein sequence ID" value="ACL25777.1"/>
    <property type="molecule type" value="Genomic_DNA"/>
</dbReference>
<dbReference type="RefSeq" id="WP_015941633.1">
    <property type="nucleotide sequence ID" value="NC_011831.1"/>
</dbReference>
<dbReference type="SMR" id="B8G644"/>
<dbReference type="STRING" id="326427.Cagg_2917"/>
<dbReference type="KEGG" id="cag:Cagg_2917"/>
<dbReference type="eggNOG" id="COG0413">
    <property type="taxonomic scope" value="Bacteria"/>
</dbReference>
<dbReference type="HOGENOM" id="CLU_036645_1_0_0"/>
<dbReference type="OrthoDB" id="9781789at2"/>
<dbReference type="UniPathway" id="UPA00028">
    <property type="reaction ID" value="UER00003"/>
</dbReference>
<dbReference type="Proteomes" id="UP000002508">
    <property type="component" value="Chromosome"/>
</dbReference>
<dbReference type="GO" id="GO:0005737">
    <property type="term" value="C:cytoplasm"/>
    <property type="evidence" value="ECO:0007669"/>
    <property type="project" value="UniProtKB-SubCell"/>
</dbReference>
<dbReference type="GO" id="GO:0003864">
    <property type="term" value="F:3-methyl-2-oxobutanoate hydroxymethyltransferase activity"/>
    <property type="evidence" value="ECO:0007669"/>
    <property type="project" value="UniProtKB-UniRule"/>
</dbReference>
<dbReference type="GO" id="GO:0000287">
    <property type="term" value="F:magnesium ion binding"/>
    <property type="evidence" value="ECO:0007669"/>
    <property type="project" value="TreeGrafter"/>
</dbReference>
<dbReference type="GO" id="GO:0015940">
    <property type="term" value="P:pantothenate biosynthetic process"/>
    <property type="evidence" value="ECO:0007669"/>
    <property type="project" value="UniProtKB-UniRule"/>
</dbReference>
<dbReference type="CDD" id="cd06557">
    <property type="entry name" value="KPHMT-like"/>
    <property type="match status" value="1"/>
</dbReference>
<dbReference type="FunFam" id="3.20.20.60:FF:000003">
    <property type="entry name" value="3-methyl-2-oxobutanoate hydroxymethyltransferase"/>
    <property type="match status" value="1"/>
</dbReference>
<dbReference type="Gene3D" id="3.20.20.60">
    <property type="entry name" value="Phosphoenolpyruvate-binding domains"/>
    <property type="match status" value="1"/>
</dbReference>
<dbReference type="HAMAP" id="MF_00156">
    <property type="entry name" value="PanB"/>
    <property type="match status" value="1"/>
</dbReference>
<dbReference type="InterPro" id="IPR003700">
    <property type="entry name" value="Pantoate_hydroxy_MeTrfase"/>
</dbReference>
<dbReference type="InterPro" id="IPR015813">
    <property type="entry name" value="Pyrv/PenolPyrv_kinase-like_dom"/>
</dbReference>
<dbReference type="InterPro" id="IPR040442">
    <property type="entry name" value="Pyrv_kinase-like_dom_sf"/>
</dbReference>
<dbReference type="NCBIfam" id="TIGR00222">
    <property type="entry name" value="panB"/>
    <property type="match status" value="1"/>
</dbReference>
<dbReference type="NCBIfam" id="NF001452">
    <property type="entry name" value="PRK00311.1"/>
    <property type="match status" value="1"/>
</dbReference>
<dbReference type="PANTHER" id="PTHR20881">
    <property type="entry name" value="3-METHYL-2-OXOBUTANOATE HYDROXYMETHYLTRANSFERASE"/>
    <property type="match status" value="1"/>
</dbReference>
<dbReference type="PANTHER" id="PTHR20881:SF0">
    <property type="entry name" value="3-METHYL-2-OXOBUTANOATE HYDROXYMETHYLTRANSFERASE"/>
    <property type="match status" value="1"/>
</dbReference>
<dbReference type="Pfam" id="PF02548">
    <property type="entry name" value="Pantoate_transf"/>
    <property type="match status" value="1"/>
</dbReference>
<dbReference type="PIRSF" id="PIRSF000388">
    <property type="entry name" value="Pantoate_hydroxy_MeTrfase"/>
    <property type="match status" value="1"/>
</dbReference>
<dbReference type="SUPFAM" id="SSF51621">
    <property type="entry name" value="Phosphoenolpyruvate/pyruvate domain"/>
    <property type="match status" value="1"/>
</dbReference>
<sequence>MRTTIRDIQQMRDRGERIPMVTAYDYTSAQIADRAGIPMILVGDSLGMVVLGHDSTVPVTLDEMIHHTRAVVRGARNALIIGDLPFLTYASPEQAVISAGRMLQEAGAQAVKLEGGVHIAPTIARLVHLGIPVMGHIGFTPQAVNQIGLRVQGRRANEARQLLEDALAVQEAGAFAIVLELVPAELAQAITERLRIPTIGIGAGAGCSGQVQVWHDLLGLYSDFVPRHARRYTDLATVIGEALTQYVHDVRTGTFPGPEHSSRMDPTELAAALGNLEES</sequence>
<feature type="chain" id="PRO_1000123375" description="3-methyl-2-oxobutanoate hydroxymethyltransferase">
    <location>
        <begin position="1"/>
        <end position="279"/>
    </location>
</feature>
<feature type="active site" description="Proton acceptor" evidence="1">
    <location>
        <position position="180"/>
    </location>
</feature>
<feature type="binding site" evidence="1">
    <location>
        <begin position="44"/>
        <end position="45"/>
    </location>
    <ligand>
        <name>3-methyl-2-oxobutanoate</name>
        <dbReference type="ChEBI" id="CHEBI:11851"/>
    </ligand>
</feature>
<feature type="binding site" evidence="1">
    <location>
        <position position="44"/>
    </location>
    <ligand>
        <name>Mg(2+)</name>
        <dbReference type="ChEBI" id="CHEBI:18420"/>
    </ligand>
</feature>
<feature type="binding site" evidence="1">
    <location>
        <position position="83"/>
    </location>
    <ligand>
        <name>3-methyl-2-oxobutanoate</name>
        <dbReference type="ChEBI" id="CHEBI:11851"/>
    </ligand>
</feature>
<feature type="binding site" evidence="1">
    <location>
        <position position="83"/>
    </location>
    <ligand>
        <name>Mg(2+)</name>
        <dbReference type="ChEBI" id="CHEBI:18420"/>
    </ligand>
</feature>
<feature type="binding site" evidence="1">
    <location>
        <position position="112"/>
    </location>
    <ligand>
        <name>3-methyl-2-oxobutanoate</name>
        <dbReference type="ChEBI" id="CHEBI:11851"/>
    </ligand>
</feature>
<feature type="binding site" evidence="1">
    <location>
        <position position="114"/>
    </location>
    <ligand>
        <name>Mg(2+)</name>
        <dbReference type="ChEBI" id="CHEBI:18420"/>
    </ligand>
</feature>
<evidence type="ECO:0000255" key="1">
    <source>
        <dbReference type="HAMAP-Rule" id="MF_00156"/>
    </source>
</evidence>
<protein>
    <recommendedName>
        <fullName evidence="1">3-methyl-2-oxobutanoate hydroxymethyltransferase</fullName>
        <ecNumber evidence="1">2.1.2.11</ecNumber>
    </recommendedName>
    <alternativeName>
        <fullName evidence="1">Ketopantoate hydroxymethyltransferase</fullName>
        <shortName evidence="1">KPHMT</shortName>
    </alternativeName>
</protein>
<gene>
    <name evidence="1" type="primary">panB</name>
    <name type="ordered locus">Cagg_2917</name>
</gene>
<organism>
    <name type="scientific">Chloroflexus aggregans (strain MD-66 / DSM 9485)</name>
    <dbReference type="NCBI Taxonomy" id="326427"/>
    <lineage>
        <taxon>Bacteria</taxon>
        <taxon>Bacillati</taxon>
        <taxon>Chloroflexota</taxon>
        <taxon>Chloroflexia</taxon>
        <taxon>Chloroflexales</taxon>
        <taxon>Chloroflexineae</taxon>
        <taxon>Chloroflexaceae</taxon>
        <taxon>Chloroflexus</taxon>
    </lineage>
</organism>
<comment type="function">
    <text evidence="1">Catalyzes the reversible reaction in which hydroxymethyl group from 5,10-methylenetetrahydrofolate is transferred onto alpha-ketoisovalerate to form ketopantoate.</text>
</comment>
<comment type="catalytic activity">
    <reaction evidence="1">
        <text>3-methyl-2-oxobutanoate + (6R)-5,10-methylene-5,6,7,8-tetrahydrofolate + H2O = 2-dehydropantoate + (6S)-5,6,7,8-tetrahydrofolate</text>
        <dbReference type="Rhea" id="RHEA:11824"/>
        <dbReference type="ChEBI" id="CHEBI:11561"/>
        <dbReference type="ChEBI" id="CHEBI:11851"/>
        <dbReference type="ChEBI" id="CHEBI:15377"/>
        <dbReference type="ChEBI" id="CHEBI:15636"/>
        <dbReference type="ChEBI" id="CHEBI:57453"/>
        <dbReference type="EC" id="2.1.2.11"/>
    </reaction>
</comment>
<comment type="cofactor">
    <cofactor evidence="1">
        <name>Mg(2+)</name>
        <dbReference type="ChEBI" id="CHEBI:18420"/>
    </cofactor>
    <text evidence="1">Binds 1 Mg(2+) ion per subunit.</text>
</comment>
<comment type="pathway">
    <text evidence="1">Cofactor biosynthesis; (R)-pantothenate biosynthesis; (R)-pantoate from 3-methyl-2-oxobutanoate: step 1/2.</text>
</comment>
<comment type="subunit">
    <text evidence="1">Homodecamer; pentamer of dimers.</text>
</comment>
<comment type="subcellular location">
    <subcellularLocation>
        <location evidence="1">Cytoplasm</location>
    </subcellularLocation>
</comment>
<comment type="similarity">
    <text evidence="1">Belongs to the PanB family.</text>
</comment>
<proteinExistence type="inferred from homology"/>